<reference key="1">
    <citation type="journal article" date="1997" name="J. Bacteriol.">
        <title>High-level genetic diversity in the vapD chromosomal region of Helicobacter pylori.</title>
        <authorList>
            <person name="Cao P."/>
            <person name="Cover T.L."/>
        </authorList>
    </citation>
    <scope>NUCLEOTIDE SEQUENCE [GENOMIC DNA]</scope>
    <source>
        <strain>ATCC 49503 / 60190</strain>
    </source>
</reference>
<reference key="2">
    <citation type="journal article" date="1997" name="Nature">
        <title>The complete genome sequence of the gastric pathogen Helicobacter pylori.</title>
        <authorList>
            <person name="Tomb J.-F."/>
            <person name="White O."/>
            <person name="Kerlavage A.R."/>
            <person name="Clayton R.A."/>
            <person name="Sutton G.G."/>
            <person name="Fleischmann R.D."/>
            <person name="Ketchum K.A."/>
            <person name="Klenk H.-P."/>
            <person name="Gill S.R."/>
            <person name="Dougherty B.A."/>
            <person name="Nelson K.E."/>
            <person name="Quackenbush J."/>
            <person name="Zhou L."/>
            <person name="Kirkness E.F."/>
            <person name="Peterson S.N."/>
            <person name="Loftus B.J."/>
            <person name="Richardson D.L."/>
            <person name="Dodson R.J."/>
            <person name="Khalak H.G."/>
            <person name="Glodek A."/>
            <person name="McKenney K."/>
            <person name="FitzGerald L.M."/>
            <person name="Lee N."/>
            <person name="Adams M.D."/>
            <person name="Hickey E.K."/>
            <person name="Berg D.E."/>
            <person name="Gocayne J.D."/>
            <person name="Utterback T.R."/>
            <person name="Peterson J.D."/>
            <person name="Kelley J.M."/>
            <person name="Cotton M.D."/>
            <person name="Weidman J.F."/>
            <person name="Fujii C."/>
            <person name="Bowman C."/>
            <person name="Watthey L."/>
            <person name="Wallin E."/>
            <person name="Hayes W.S."/>
            <person name="Borodovsky M."/>
            <person name="Karp P.D."/>
            <person name="Smith H.O."/>
            <person name="Fraser C.M."/>
            <person name="Venter J.C."/>
        </authorList>
    </citation>
    <scope>NUCLEOTIDE SEQUENCE [LARGE SCALE GENOMIC DNA]</scope>
    <source>
        <strain>ATCC 700392 / 26695</strain>
    </source>
</reference>
<keyword id="KW-0997">Cell inner membrane</keyword>
<keyword id="KW-1003">Cell membrane</keyword>
<keyword id="KW-0406">Ion transport</keyword>
<keyword id="KW-0408">Iron</keyword>
<keyword id="KW-0410">Iron transport</keyword>
<keyword id="KW-0472">Membrane</keyword>
<keyword id="KW-1185">Reference proteome</keyword>
<keyword id="KW-0812">Transmembrane</keyword>
<keyword id="KW-1133">Transmembrane helix</keyword>
<keyword id="KW-0813">Transport</keyword>
<protein>
    <recommendedName>
        <fullName>Probable iron chelatin transport system permease protein HP_0889</fullName>
    </recommendedName>
</protein>
<gene>
    <name type="ordered locus">HP_0889</name>
</gene>
<comment type="function">
    <text evidence="2">Part of a binding-protein-dependent transport system for an iron chelatin; probably responsible for the translocation of the substrate across the membrane.</text>
</comment>
<comment type="subcellular location">
    <subcellularLocation>
        <location>Cell inner membrane</location>
        <topology>Multi-pass membrane protein</topology>
    </subcellularLocation>
</comment>
<comment type="similarity">
    <text evidence="2">Belongs to the binding-protein-dependent transport system permease family. FecCD subfamily.</text>
</comment>
<proteinExistence type="inferred from homology"/>
<evidence type="ECO:0000255" key="1"/>
<evidence type="ECO:0000305" key="2"/>
<feature type="chain" id="PRO_0000060283" description="Probable iron chelatin transport system permease protein HP_0889">
    <location>
        <begin position="1"/>
        <end position="326"/>
    </location>
</feature>
<feature type="transmembrane region" description="Helical" evidence="1">
    <location>
        <begin position="7"/>
        <end position="27"/>
    </location>
</feature>
<feature type="transmembrane region" description="Helical" evidence="1">
    <location>
        <begin position="64"/>
        <end position="84"/>
    </location>
</feature>
<feature type="transmembrane region" description="Helical" evidence="1">
    <location>
        <begin position="91"/>
        <end position="111"/>
    </location>
</feature>
<feature type="transmembrane region" description="Helical" evidence="1">
    <location>
        <begin position="113"/>
        <end position="133"/>
    </location>
</feature>
<feature type="transmembrane region" description="Helical" evidence="1">
    <location>
        <begin position="142"/>
        <end position="162"/>
    </location>
</feature>
<feature type="transmembrane region" description="Helical" evidence="1">
    <location>
        <begin position="164"/>
        <end position="184"/>
    </location>
</feature>
<feature type="transmembrane region" description="Helical" evidence="1">
    <location>
        <begin position="187"/>
        <end position="207"/>
    </location>
</feature>
<feature type="transmembrane region" description="Helical" evidence="1">
    <location>
        <begin position="241"/>
        <end position="261"/>
    </location>
</feature>
<feature type="transmembrane region" description="Helical" evidence="1">
    <location>
        <begin position="275"/>
        <end position="295"/>
    </location>
</feature>
<feature type="transmembrane region" description="Helical" evidence="1">
    <location>
        <begin position="301"/>
        <end position="321"/>
    </location>
</feature>
<sequence length="326" mass="34624">MLKTYHIALACVILAVVVLLFGGESLSLEEWQEVCLNVKNHFLHNEELSSLSIIILEIRLPRVILALLVGASLSGSGVVMQTIFRNPLVDPFLLGISSGAMLGVAMAIAVVESNIAILAFFGAILASLAVLAMNRVLGNSVLSLVLSGVVLSAFLSALAGAIKFFVIPQKAQAIVVWLLGSLSLSSYKDCLIAFIGLSLGFIPLFLLRWRINLLSLSDAQSLSLGINPVLLRSLCLVCVSVASALAVSVSGTIGWIGLVIPHVARLFFGANLQKLLLSSLLMGAFFLLLADVVAKTITPYDLPVGIATSVLGAPFFLWLLFRTRGV</sequence>
<name>Y889_HELPY</name>
<accession>O05731</accession>
<organism>
    <name type="scientific">Helicobacter pylori (strain ATCC 700392 / 26695)</name>
    <name type="common">Campylobacter pylori</name>
    <dbReference type="NCBI Taxonomy" id="85962"/>
    <lineage>
        <taxon>Bacteria</taxon>
        <taxon>Pseudomonadati</taxon>
        <taxon>Campylobacterota</taxon>
        <taxon>Epsilonproteobacteria</taxon>
        <taxon>Campylobacterales</taxon>
        <taxon>Helicobacteraceae</taxon>
        <taxon>Helicobacter</taxon>
    </lineage>
</organism>
<dbReference type="EMBL" id="U94318">
    <property type="protein sequence ID" value="AAC45244.1"/>
    <property type="molecule type" value="Genomic_DNA"/>
</dbReference>
<dbReference type="EMBL" id="AE000511">
    <property type="protein sequence ID" value="AAD07937.1"/>
    <property type="molecule type" value="Genomic_DNA"/>
</dbReference>
<dbReference type="PIR" id="A64631">
    <property type="entry name" value="A64631"/>
</dbReference>
<dbReference type="RefSeq" id="NP_207682.1">
    <property type="nucleotide sequence ID" value="NC_000915.1"/>
</dbReference>
<dbReference type="RefSeq" id="WP_000921458.1">
    <property type="nucleotide sequence ID" value="NC_018939.1"/>
</dbReference>
<dbReference type="SMR" id="O05731"/>
<dbReference type="DIP" id="DIP-3475N"/>
<dbReference type="FunCoup" id="O05731">
    <property type="interactions" value="87"/>
</dbReference>
<dbReference type="IntAct" id="O05731">
    <property type="interactions" value="3"/>
</dbReference>
<dbReference type="MINT" id="O05731"/>
<dbReference type="STRING" id="85962.HP_0889"/>
<dbReference type="PaxDb" id="85962-C694_04565"/>
<dbReference type="EnsemblBacteria" id="AAD07937">
    <property type="protein sequence ID" value="AAD07937"/>
    <property type="gene ID" value="HP_0889"/>
</dbReference>
<dbReference type="KEGG" id="heo:C694_04565"/>
<dbReference type="KEGG" id="hpy:HP_0889"/>
<dbReference type="PATRIC" id="fig|85962.47.peg.947"/>
<dbReference type="eggNOG" id="COG0609">
    <property type="taxonomic scope" value="Bacteria"/>
</dbReference>
<dbReference type="InParanoid" id="O05731"/>
<dbReference type="OrthoDB" id="9782305at2"/>
<dbReference type="PhylomeDB" id="O05731"/>
<dbReference type="Proteomes" id="UP000000429">
    <property type="component" value="Chromosome"/>
</dbReference>
<dbReference type="GO" id="GO:0005886">
    <property type="term" value="C:plasma membrane"/>
    <property type="evidence" value="ECO:0000318"/>
    <property type="project" value="GO_Central"/>
</dbReference>
<dbReference type="GO" id="GO:0022857">
    <property type="term" value="F:transmembrane transporter activity"/>
    <property type="evidence" value="ECO:0000318"/>
    <property type="project" value="GO_Central"/>
</dbReference>
<dbReference type="GO" id="GO:0033214">
    <property type="term" value="P:siderophore-dependent iron import into cell"/>
    <property type="evidence" value="ECO:0000318"/>
    <property type="project" value="GO_Central"/>
</dbReference>
<dbReference type="CDD" id="cd06550">
    <property type="entry name" value="TM_ABC_iron-siderophores_like"/>
    <property type="match status" value="1"/>
</dbReference>
<dbReference type="FunFam" id="1.10.3470.10:FF:000014">
    <property type="entry name" value="Iron ABC transporter permease"/>
    <property type="match status" value="1"/>
</dbReference>
<dbReference type="Gene3D" id="1.10.3470.10">
    <property type="entry name" value="ABC transporter involved in vitamin B12 uptake, BtuC"/>
    <property type="match status" value="1"/>
</dbReference>
<dbReference type="InterPro" id="IPR037294">
    <property type="entry name" value="ABC_BtuC-like"/>
</dbReference>
<dbReference type="InterPro" id="IPR000522">
    <property type="entry name" value="ABC_transptr_permease_BtuC"/>
</dbReference>
<dbReference type="PANTHER" id="PTHR30472">
    <property type="entry name" value="FERRIC ENTEROBACTIN TRANSPORT SYSTEM PERMEASE PROTEIN"/>
    <property type="match status" value="1"/>
</dbReference>
<dbReference type="PANTHER" id="PTHR30472:SF70">
    <property type="entry name" value="MOLYBDATE IMPORT SYSTEM PERMEASE PROTEIN MOLB"/>
    <property type="match status" value="1"/>
</dbReference>
<dbReference type="Pfam" id="PF01032">
    <property type="entry name" value="FecCD"/>
    <property type="match status" value="1"/>
</dbReference>
<dbReference type="SUPFAM" id="SSF81345">
    <property type="entry name" value="ABC transporter involved in vitamin B12 uptake, BtuC"/>
    <property type="match status" value="1"/>
</dbReference>